<dbReference type="EMBL" id="AK009942">
    <property type="protein sequence ID" value="BAC25277.1"/>
    <property type="molecule type" value="mRNA"/>
</dbReference>
<dbReference type="EMBL" id="BC005568">
    <property type="protein sequence ID" value="AAH05568.1"/>
    <property type="molecule type" value="mRNA"/>
</dbReference>
<dbReference type="CCDS" id="CCDS36345.1"/>
<dbReference type="RefSeq" id="NP_001344509.1">
    <property type="nucleotide sequence ID" value="NM_001357580.2"/>
</dbReference>
<dbReference type="RefSeq" id="NP_543122.1">
    <property type="nucleotide sequence ID" value="NM_080846.2"/>
</dbReference>
<dbReference type="RefSeq" id="XP_006534460.1">
    <property type="nucleotide sequence ID" value="XM_006534397.3"/>
</dbReference>
<dbReference type="RefSeq" id="XP_030102266.1">
    <property type="nucleotide sequence ID" value="XM_030246406.2"/>
</dbReference>
<dbReference type="RefSeq" id="XP_036012950.1">
    <property type="nucleotide sequence ID" value="XM_036157057.1"/>
</dbReference>
<dbReference type="SMR" id="Q99JY6"/>
<dbReference type="FunCoup" id="Q99JY6">
    <property type="interactions" value="182"/>
</dbReference>
<dbReference type="STRING" id="10090.ENSMUSP00000021302"/>
<dbReference type="PhosphoSitePlus" id="Q99JY6"/>
<dbReference type="PaxDb" id="10090-ENSMUSP00000021302"/>
<dbReference type="Antibodypedia" id="63991">
    <property type="antibodies" value="35 antibodies from 10 providers"/>
</dbReference>
<dbReference type="Ensembl" id="ENSMUST00000021302.15">
    <property type="protein sequence ID" value="ENSMUSP00000021302.9"/>
    <property type="gene ID" value="ENSMUSG00000020928.15"/>
</dbReference>
<dbReference type="Ensembl" id="ENSMUST00000107072.2">
    <property type="protein sequence ID" value="ENSMUSP00000102687.2"/>
    <property type="gene ID" value="ENSMUSG00000020928.15"/>
</dbReference>
<dbReference type="Ensembl" id="ENSMUST00000107073.8">
    <property type="protein sequence ID" value="ENSMUSP00000102688.2"/>
    <property type="gene ID" value="ENSMUSG00000020928.15"/>
</dbReference>
<dbReference type="GeneID" id="75689"/>
<dbReference type="KEGG" id="mmu:75689"/>
<dbReference type="UCSC" id="uc007lso.1">
    <property type="organism name" value="mouse"/>
</dbReference>
<dbReference type="AGR" id="MGI:1922939"/>
<dbReference type="CTD" id="51751"/>
<dbReference type="MGI" id="MGI:1922939">
    <property type="gene designation" value="Higd1b"/>
</dbReference>
<dbReference type="VEuPathDB" id="HostDB:ENSMUSG00000020928"/>
<dbReference type="eggNOG" id="KOG4431">
    <property type="taxonomic scope" value="Eukaryota"/>
</dbReference>
<dbReference type="GeneTree" id="ENSGT00940000161778"/>
<dbReference type="HOGENOM" id="CLU_153308_2_0_1"/>
<dbReference type="InParanoid" id="Q99JY6"/>
<dbReference type="OMA" id="NRGWWAP"/>
<dbReference type="OrthoDB" id="10003563at2759"/>
<dbReference type="PhylomeDB" id="Q99JY6"/>
<dbReference type="TreeFam" id="TF314628"/>
<dbReference type="BioGRID-ORCS" id="75689">
    <property type="hits" value="2 hits in 78 CRISPR screens"/>
</dbReference>
<dbReference type="ChiTaRS" id="Higd1b">
    <property type="organism name" value="mouse"/>
</dbReference>
<dbReference type="PRO" id="PR:Q99JY6"/>
<dbReference type="Proteomes" id="UP000000589">
    <property type="component" value="Chromosome 11"/>
</dbReference>
<dbReference type="RNAct" id="Q99JY6">
    <property type="molecule type" value="protein"/>
</dbReference>
<dbReference type="Bgee" id="ENSMUSG00000020928">
    <property type="expression patterns" value="Expressed in interventricular septum and 120 other cell types or tissues"/>
</dbReference>
<dbReference type="GO" id="GO:0016020">
    <property type="term" value="C:membrane"/>
    <property type="evidence" value="ECO:0007669"/>
    <property type="project" value="UniProtKB-SubCell"/>
</dbReference>
<dbReference type="Gene3D" id="6.10.140.1320">
    <property type="match status" value="1"/>
</dbReference>
<dbReference type="InterPro" id="IPR007667">
    <property type="entry name" value="Hypoxia_induced_domain"/>
</dbReference>
<dbReference type="InterPro" id="IPR050355">
    <property type="entry name" value="RCF1"/>
</dbReference>
<dbReference type="PANTHER" id="PTHR12297:SF9">
    <property type="entry name" value="HIG1 DOMAIN FAMILY MEMBER 1B"/>
    <property type="match status" value="1"/>
</dbReference>
<dbReference type="PANTHER" id="PTHR12297">
    <property type="entry name" value="HYPOXIA-INDUCBILE GENE 1 HIG1 -RELATED"/>
    <property type="match status" value="1"/>
</dbReference>
<dbReference type="Pfam" id="PF04588">
    <property type="entry name" value="HIG_1_N"/>
    <property type="match status" value="1"/>
</dbReference>
<dbReference type="PROSITE" id="PS51503">
    <property type="entry name" value="HIG1"/>
    <property type="match status" value="1"/>
</dbReference>
<name>HIG1B_MOUSE</name>
<sequence length="98" mass="10940">MSANKGWWVPPEGEDNLSKKFLRKTRESPLVPIGVAGCLVIAAYRIYRLKARGSTKLSIHLIHTRVAAQACAVGAIMLGAMYTMYRDYIKRVSEDAEK</sequence>
<feature type="chain" id="PRO_0000215775" description="HIG1 domain family member 1B">
    <location>
        <begin position="1"/>
        <end position="98"/>
    </location>
</feature>
<feature type="topological domain" description="Cytoplasmic" evidence="1">
    <location>
        <begin position="1"/>
        <end position="28"/>
    </location>
</feature>
<feature type="transmembrane region" description="Helical" evidence="2">
    <location>
        <begin position="29"/>
        <end position="46"/>
    </location>
</feature>
<feature type="topological domain" description="Extracellular" evidence="1">
    <location>
        <begin position="47"/>
        <end position="60"/>
    </location>
</feature>
<feature type="transmembrane region" description="Helical" evidence="2">
    <location>
        <begin position="61"/>
        <end position="83"/>
    </location>
</feature>
<feature type="topological domain" description="Cytoplasmic" evidence="1">
    <location>
        <begin position="84"/>
        <end position="98"/>
    </location>
</feature>
<feature type="domain" description="HIG1" evidence="2">
    <location>
        <begin position="1"/>
        <end position="94"/>
    </location>
</feature>
<feature type="sequence conflict" description="In Ref. 1; BAC25277." evidence="3" ref="1">
    <original>G</original>
    <variation>R</variation>
    <location>
        <position position="74"/>
    </location>
</feature>
<organism>
    <name type="scientific">Mus musculus</name>
    <name type="common">Mouse</name>
    <dbReference type="NCBI Taxonomy" id="10090"/>
    <lineage>
        <taxon>Eukaryota</taxon>
        <taxon>Metazoa</taxon>
        <taxon>Chordata</taxon>
        <taxon>Craniata</taxon>
        <taxon>Vertebrata</taxon>
        <taxon>Euteleostomi</taxon>
        <taxon>Mammalia</taxon>
        <taxon>Eutheria</taxon>
        <taxon>Euarchontoglires</taxon>
        <taxon>Glires</taxon>
        <taxon>Rodentia</taxon>
        <taxon>Myomorpha</taxon>
        <taxon>Muroidea</taxon>
        <taxon>Muridae</taxon>
        <taxon>Murinae</taxon>
        <taxon>Mus</taxon>
        <taxon>Mus</taxon>
    </lineage>
</organism>
<gene>
    <name type="primary">Higd1b</name>
</gene>
<reference key="1">
    <citation type="journal article" date="2005" name="Science">
        <title>The transcriptional landscape of the mammalian genome.</title>
        <authorList>
            <person name="Carninci P."/>
            <person name="Kasukawa T."/>
            <person name="Katayama S."/>
            <person name="Gough J."/>
            <person name="Frith M.C."/>
            <person name="Maeda N."/>
            <person name="Oyama R."/>
            <person name="Ravasi T."/>
            <person name="Lenhard B."/>
            <person name="Wells C."/>
            <person name="Kodzius R."/>
            <person name="Shimokawa K."/>
            <person name="Bajic V.B."/>
            <person name="Brenner S.E."/>
            <person name="Batalov S."/>
            <person name="Forrest A.R."/>
            <person name="Zavolan M."/>
            <person name="Davis M.J."/>
            <person name="Wilming L.G."/>
            <person name="Aidinis V."/>
            <person name="Allen J.E."/>
            <person name="Ambesi-Impiombato A."/>
            <person name="Apweiler R."/>
            <person name="Aturaliya R.N."/>
            <person name="Bailey T.L."/>
            <person name="Bansal M."/>
            <person name="Baxter L."/>
            <person name="Beisel K.W."/>
            <person name="Bersano T."/>
            <person name="Bono H."/>
            <person name="Chalk A.M."/>
            <person name="Chiu K.P."/>
            <person name="Choudhary V."/>
            <person name="Christoffels A."/>
            <person name="Clutterbuck D.R."/>
            <person name="Crowe M.L."/>
            <person name="Dalla E."/>
            <person name="Dalrymple B.P."/>
            <person name="de Bono B."/>
            <person name="Della Gatta G."/>
            <person name="di Bernardo D."/>
            <person name="Down T."/>
            <person name="Engstrom P."/>
            <person name="Fagiolini M."/>
            <person name="Faulkner G."/>
            <person name="Fletcher C.F."/>
            <person name="Fukushima T."/>
            <person name="Furuno M."/>
            <person name="Futaki S."/>
            <person name="Gariboldi M."/>
            <person name="Georgii-Hemming P."/>
            <person name="Gingeras T.R."/>
            <person name="Gojobori T."/>
            <person name="Green R.E."/>
            <person name="Gustincich S."/>
            <person name="Harbers M."/>
            <person name="Hayashi Y."/>
            <person name="Hensch T.K."/>
            <person name="Hirokawa N."/>
            <person name="Hill D."/>
            <person name="Huminiecki L."/>
            <person name="Iacono M."/>
            <person name="Ikeo K."/>
            <person name="Iwama A."/>
            <person name="Ishikawa T."/>
            <person name="Jakt M."/>
            <person name="Kanapin A."/>
            <person name="Katoh M."/>
            <person name="Kawasawa Y."/>
            <person name="Kelso J."/>
            <person name="Kitamura H."/>
            <person name="Kitano H."/>
            <person name="Kollias G."/>
            <person name="Krishnan S.P."/>
            <person name="Kruger A."/>
            <person name="Kummerfeld S.K."/>
            <person name="Kurochkin I.V."/>
            <person name="Lareau L.F."/>
            <person name="Lazarevic D."/>
            <person name="Lipovich L."/>
            <person name="Liu J."/>
            <person name="Liuni S."/>
            <person name="McWilliam S."/>
            <person name="Madan Babu M."/>
            <person name="Madera M."/>
            <person name="Marchionni L."/>
            <person name="Matsuda H."/>
            <person name="Matsuzawa S."/>
            <person name="Miki H."/>
            <person name="Mignone F."/>
            <person name="Miyake S."/>
            <person name="Morris K."/>
            <person name="Mottagui-Tabar S."/>
            <person name="Mulder N."/>
            <person name="Nakano N."/>
            <person name="Nakauchi H."/>
            <person name="Ng P."/>
            <person name="Nilsson R."/>
            <person name="Nishiguchi S."/>
            <person name="Nishikawa S."/>
            <person name="Nori F."/>
            <person name="Ohara O."/>
            <person name="Okazaki Y."/>
            <person name="Orlando V."/>
            <person name="Pang K.C."/>
            <person name="Pavan W.J."/>
            <person name="Pavesi G."/>
            <person name="Pesole G."/>
            <person name="Petrovsky N."/>
            <person name="Piazza S."/>
            <person name="Reed J."/>
            <person name="Reid J.F."/>
            <person name="Ring B.Z."/>
            <person name="Ringwald M."/>
            <person name="Rost B."/>
            <person name="Ruan Y."/>
            <person name="Salzberg S.L."/>
            <person name="Sandelin A."/>
            <person name="Schneider C."/>
            <person name="Schoenbach C."/>
            <person name="Sekiguchi K."/>
            <person name="Semple C.A."/>
            <person name="Seno S."/>
            <person name="Sessa L."/>
            <person name="Sheng Y."/>
            <person name="Shibata Y."/>
            <person name="Shimada H."/>
            <person name="Shimada K."/>
            <person name="Silva D."/>
            <person name="Sinclair B."/>
            <person name="Sperling S."/>
            <person name="Stupka E."/>
            <person name="Sugiura K."/>
            <person name="Sultana R."/>
            <person name="Takenaka Y."/>
            <person name="Taki K."/>
            <person name="Tammoja K."/>
            <person name="Tan S.L."/>
            <person name="Tang S."/>
            <person name="Taylor M.S."/>
            <person name="Tegner J."/>
            <person name="Teichmann S.A."/>
            <person name="Ueda H.R."/>
            <person name="van Nimwegen E."/>
            <person name="Verardo R."/>
            <person name="Wei C.L."/>
            <person name="Yagi K."/>
            <person name="Yamanishi H."/>
            <person name="Zabarovsky E."/>
            <person name="Zhu S."/>
            <person name="Zimmer A."/>
            <person name="Hide W."/>
            <person name="Bult C."/>
            <person name="Grimmond S.M."/>
            <person name="Teasdale R.D."/>
            <person name="Liu E.T."/>
            <person name="Brusic V."/>
            <person name="Quackenbush J."/>
            <person name="Wahlestedt C."/>
            <person name="Mattick J.S."/>
            <person name="Hume D.A."/>
            <person name="Kai C."/>
            <person name="Sasaki D."/>
            <person name="Tomaru Y."/>
            <person name="Fukuda S."/>
            <person name="Kanamori-Katayama M."/>
            <person name="Suzuki M."/>
            <person name="Aoki J."/>
            <person name="Arakawa T."/>
            <person name="Iida J."/>
            <person name="Imamura K."/>
            <person name="Itoh M."/>
            <person name="Kato T."/>
            <person name="Kawaji H."/>
            <person name="Kawagashira N."/>
            <person name="Kawashima T."/>
            <person name="Kojima M."/>
            <person name="Kondo S."/>
            <person name="Konno H."/>
            <person name="Nakano K."/>
            <person name="Ninomiya N."/>
            <person name="Nishio T."/>
            <person name="Okada M."/>
            <person name="Plessy C."/>
            <person name="Shibata K."/>
            <person name="Shiraki T."/>
            <person name="Suzuki S."/>
            <person name="Tagami M."/>
            <person name="Waki K."/>
            <person name="Watahiki A."/>
            <person name="Okamura-Oho Y."/>
            <person name="Suzuki H."/>
            <person name="Kawai J."/>
            <person name="Hayashizaki Y."/>
        </authorList>
    </citation>
    <scope>NUCLEOTIDE SEQUENCE [LARGE SCALE MRNA]</scope>
    <source>
        <strain>C57BL/6J</strain>
        <tissue>Tongue</tissue>
    </source>
</reference>
<reference key="2">
    <citation type="journal article" date="2004" name="Genome Res.">
        <title>The status, quality, and expansion of the NIH full-length cDNA project: the Mammalian Gene Collection (MGC).</title>
        <authorList>
            <consortium name="The MGC Project Team"/>
        </authorList>
    </citation>
    <scope>NUCLEOTIDE SEQUENCE [LARGE SCALE MRNA]</scope>
    <source>
        <strain>FVB/N</strain>
        <tissue>Mammary tumor</tissue>
    </source>
</reference>
<reference key="3">
    <citation type="journal article" date="2010" name="Cell">
        <title>A tissue-specific atlas of mouse protein phosphorylation and expression.</title>
        <authorList>
            <person name="Huttlin E.L."/>
            <person name="Jedrychowski M.P."/>
            <person name="Elias J.E."/>
            <person name="Goswami T."/>
            <person name="Rad R."/>
            <person name="Beausoleil S.A."/>
            <person name="Villen J."/>
            <person name="Haas W."/>
            <person name="Sowa M.E."/>
            <person name="Gygi S.P."/>
        </authorList>
    </citation>
    <scope>IDENTIFICATION BY MASS SPECTROMETRY [LARGE SCALE ANALYSIS]</scope>
    <source>
        <tissue>Lung</tissue>
    </source>
</reference>
<keyword id="KW-0472">Membrane</keyword>
<keyword id="KW-1185">Reference proteome</keyword>
<keyword id="KW-0812">Transmembrane</keyword>
<keyword id="KW-1133">Transmembrane helix</keyword>
<evidence type="ECO:0000255" key="1"/>
<evidence type="ECO:0000255" key="2">
    <source>
        <dbReference type="PROSITE-ProRule" id="PRU00836"/>
    </source>
</evidence>
<evidence type="ECO:0000305" key="3"/>
<comment type="subcellular location">
    <subcellularLocation>
        <location evidence="2">Membrane</location>
        <topology evidence="2">Multi-pass membrane protein</topology>
    </subcellularLocation>
</comment>
<accession>Q99JY6</accession>
<accession>Q8C1M5</accession>
<proteinExistence type="evidence at protein level"/>
<protein>
    <recommendedName>
        <fullName>HIG1 domain family member 1B</fullName>
    </recommendedName>
</protein>